<proteinExistence type="inferred from homology"/>
<gene>
    <name evidence="1" type="primary">rpmJ</name>
    <name type="ordered locus">Dgeo_1844</name>
</gene>
<protein>
    <recommendedName>
        <fullName evidence="1">Large ribosomal subunit protein bL36</fullName>
    </recommendedName>
    <alternativeName>
        <fullName evidence="2">50S ribosomal protein L36</fullName>
    </alternativeName>
</protein>
<feature type="chain" id="PRO_0000302195" description="Large ribosomal subunit protein bL36">
    <location>
        <begin position="1"/>
        <end position="37"/>
    </location>
</feature>
<organism>
    <name type="scientific">Deinococcus geothermalis (strain DSM 11300 / CIP 105573 / AG-3a)</name>
    <dbReference type="NCBI Taxonomy" id="319795"/>
    <lineage>
        <taxon>Bacteria</taxon>
        <taxon>Thermotogati</taxon>
        <taxon>Deinococcota</taxon>
        <taxon>Deinococci</taxon>
        <taxon>Deinococcales</taxon>
        <taxon>Deinococcaceae</taxon>
        <taxon>Deinococcus</taxon>
    </lineage>
</organism>
<sequence length="37" mass="4365">MKVRSSVKRMCDNCKVIRRHGRVLVICTNVKHKQRQG</sequence>
<dbReference type="EMBL" id="CP000359">
    <property type="protein sequence ID" value="ABF46139.1"/>
    <property type="molecule type" value="Genomic_DNA"/>
</dbReference>
<dbReference type="RefSeq" id="WP_011530969.1">
    <property type="nucleotide sequence ID" value="NC_008025.1"/>
</dbReference>
<dbReference type="SMR" id="Q1IX95"/>
<dbReference type="STRING" id="319795.Dgeo_1844"/>
<dbReference type="KEGG" id="dge:Dgeo_1844"/>
<dbReference type="eggNOG" id="COG0257">
    <property type="taxonomic scope" value="Bacteria"/>
</dbReference>
<dbReference type="HOGENOM" id="CLU_135723_6_2_0"/>
<dbReference type="Proteomes" id="UP000002431">
    <property type="component" value="Chromosome"/>
</dbReference>
<dbReference type="GO" id="GO:0005737">
    <property type="term" value="C:cytoplasm"/>
    <property type="evidence" value="ECO:0007669"/>
    <property type="project" value="UniProtKB-ARBA"/>
</dbReference>
<dbReference type="GO" id="GO:1990904">
    <property type="term" value="C:ribonucleoprotein complex"/>
    <property type="evidence" value="ECO:0007669"/>
    <property type="project" value="UniProtKB-KW"/>
</dbReference>
<dbReference type="GO" id="GO:0005840">
    <property type="term" value="C:ribosome"/>
    <property type="evidence" value="ECO:0007669"/>
    <property type="project" value="UniProtKB-KW"/>
</dbReference>
<dbReference type="GO" id="GO:0003735">
    <property type="term" value="F:structural constituent of ribosome"/>
    <property type="evidence" value="ECO:0007669"/>
    <property type="project" value="InterPro"/>
</dbReference>
<dbReference type="GO" id="GO:0006412">
    <property type="term" value="P:translation"/>
    <property type="evidence" value="ECO:0007669"/>
    <property type="project" value="UniProtKB-UniRule"/>
</dbReference>
<dbReference type="HAMAP" id="MF_00251">
    <property type="entry name" value="Ribosomal_bL36"/>
    <property type="match status" value="1"/>
</dbReference>
<dbReference type="InterPro" id="IPR000473">
    <property type="entry name" value="Ribosomal_bL36"/>
</dbReference>
<dbReference type="InterPro" id="IPR035977">
    <property type="entry name" value="Ribosomal_bL36_sp"/>
</dbReference>
<dbReference type="NCBIfam" id="TIGR01022">
    <property type="entry name" value="rpmJ_bact"/>
    <property type="match status" value="1"/>
</dbReference>
<dbReference type="PANTHER" id="PTHR42888">
    <property type="entry name" value="50S RIBOSOMAL PROTEIN L36, CHLOROPLASTIC"/>
    <property type="match status" value="1"/>
</dbReference>
<dbReference type="PANTHER" id="PTHR42888:SF1">
    <property type="entry name" value="LARGE RIBOSOMAL SUBUNIT PROTEIN BL36C"/>
    <property type="match status" value="1"/>
</dbReference>
<dbReference type="Pfam" id="PF00444">
    <property type="entry name" value="Ribosomal_L36"/>
    <property type="match status" value="1"/>
</dbReference>
<dbReference type="SUPFAM" id="SSF57840">
    <property type="entry name" value="Ribosomal protein L36"/>
    <property type="match status" value="1"/>
</dbReference>
<dbReference type="PROSITE" id="PS00828">
    <property type="entry name" value="RIBOSOMAL_L36"/>
    <property type="match status" value="1"/>
</dbReference>
<accession>Q1IX95</accession>
<reference key="1">
    <citation type="submission" date="2006-04" db="EMBL/GenBank/DDBJ databases">
        <title>Complete sequence of chromosome of Deinococcus geothermalis DSM 11300.</title>
        <authorList>
            <person name="Copeland A."/>
            <person name="Lucas S."/>
            <person name="Lapidus A."/>
            <person name="Barry K."/>
            <person name="Detter J.C."/>
            <person name="Glavina del Rio T."/>
            <person name="Hammon N."/>
            <person name="Israni S."/>
            <person name="Dalin E."/>
            <person name="Tice H."/>
            <person name="Pitluck S."/>
            <person name="Brettin T."/>
            <person name="Bruce D."/>
            <person name="Han C."/>
            <person name="Tapia R."/>
            <person name="Saunders E."/>
            <person name="Gilna P."/>
            <person name="Schmutz J."/>
            <person name="Larimer F."/>
            <person name="Land M."/>
            <person name="Hauser L."/>
            <person name="Kyrpides N."/>
            <person name="Kim E."/>
            <person name="Daly M.J."/>
            <person name="Fredrickson J.K."/>
            <person name="Makarova K.S."/>
            <person name="Gaidamakova E.K."/>
            <person name="Zhai M."/>
            <person name="Richardson P."/>
        </authorList>
    </citation>
    <scope>NUCLEOTIDE SEQUENCE [LARGE SCALE GENOMIC DNA]</scope>
    <source>
        <strain>DSM 11300 / CIP 105573 / AG-3a</strain>
    </source>
</reference>
<name>RL36_DEIGD</name>
<keyword id="KW-0687">Ribonucleoprotein</keyword>
<keyword id="KW-0689">Ribosomal protein</keyword>
<evidence type="ECO:0000255" key="1">
    <source>
        <dbReference type="HAMAP-Rule" id="MF_00251"/>
    </source>
</evidence>
<evidence type="ECO:0000305" key="2"/>
<comment type="similarity">
    <text evidence="1">Belongs to the bacterial ribosomal protein bL36 family.</text>
</comment>